<keyword id="KW-0413">Isomerase</keyword>
<keyword id="KW-0663">Pyridoxal phosphate</keyword>
<proteinExistence type="inferred from homology"/>
<feature type="chain" id="PRO_1000066040" description="Alanine racemase">
    <location>
        <begin position="1"/>
        <end position="382"/>
    </location>
</feature>
<feature type="active site" description="Proton acceptor; specific for D-alanine" evidence="1">
    <location>
        <position position="39"/>
    </location>
</feature>
<feature type="active site" description="Proton acceptor; specific for L-alanine" evidence="1">
    <location>
        <position position="265"/>
    </location>
</feature>
<feature type="binding site" evidence="1">
    <location>
        <position position="138"/>
    </location>
    <ligand>
        <name>substrate</name>
    </ligand>
</feature>
<feature type="binding site" evidence="1">
    <location>
        <position position="312"/>
    </location>
    <ligand>
        <name>substrate</name>
    </ligand>
</feature>
<feature type="modified residue" description="N6-(pyridoxal phosphate)lysine" evidence="1">
    <location>
        <position position="39"/>
    </location>
</feature>
<dbReference type="EC" id="5.1.1.1" evidence="1"/>
<dbReference type="EMBL" id="CP000255">
    <property type="protein sequence ID" value="ABD21507.1"/>
    <property type="molecule type" value="Genomic_DNA"/>
</dbReference>
<dbReference type="RefSeq" id="WP_001281145.1">
    <property type="nucleotide sequence ID" value="NZ_CP027476.1"/>
</dbReference>
<dbReference type="SMR" id="Q2FF55"/>
<dbReference type="KEGG" id="saa:SAUSA300_2027"/>
<dbReference type="HOGENOM" id="CLU_028393_2_1_9"/>
<dbReference type="OMA" id="HMTHFSD"/>
<dbReference type="UniPathway" id="UPA00042">
    <property type="reaction ID" value="UER00497"/>
</dbReference>
<dbReference type="Proteomes" id="UP000001939">
    <property type="component" value="Chromosome"/>
</dbReference>
<dbReference type="GO" id="GO:0005829">
    <property type="term" value="C:cytosol"/>
    <property type="evidence" value="ECO:0007669"/>
    <property type="project" value="TreeGrafter"/>
</dbReference>
<dbReference type="GO" id="GO:0008784">
    <property type="term" value="F:alanine racemase activity"/>
    <property type="evidence" value="ECO:0007669"/>
    <property type="project" value="UniProtKB-UniRule"/>
</dbReference>
<dbReference type="GO" id="GO:0030170">
    <property type="term" value="F:pyridoxal phosphate binding"/>
    <property type="evidence" value="ECO:0007669"/>
    <property type="project" value="UniProtKB-UniRule"/>
</dbReference>
<dbReference type="GO" id="GO:0030632">
    <property type="term" value="P:D-alanine biosynthetic process"/>
    <property type="evidence" value="ECO:0007669"/>
    <property type="project" value="UniProtKB-UniRule"/>
</dbReference>
<dbReference type="GO" id="GO:0009252">
    <property type="term" value="P:peptidoglycan biosynthetic process"/>
    <property type="evidence" value="ECO:0007669"/>
    <property type="project" value="TreeGrafter"/>
</dbReference>
<dbReference type="CDD" id="cd00430">
    <property type="entry name" value="PLPDE_III_AR"/>
    <property type="match status" value="1"/>
</dbReference>
<dbReference type="FunFam" id="2.40.37.10:FF:000006">
    <property type="entry name" value="Alanine racemase"/>
    <property type="match status" value="1"/>
</dbReference>
<dbReference type="FunFam" id="3.20.20.10:FF:000002">
    <property type="entry name" value="Alanine racemase"/>
    <property type="match status" value="1"/>
</dbReference>
<dbReference type="Gene3D" id="3.20.20.10">
    <property type="entry name" value="Alanine racemase"/>
    <property type="match status" value="1"/>
</dbReference>
<dbReference type="Gene3D" id="2.40.37.10">
    <property type="entry name" value="Lyase, Ornithine Decarboxylase, Chain A, domain 1"/>
    <property type="match status" value="1"/>
</dbReference>
<dbReference type="HAMAP" id="MF_01201">
    <property type="entry name" value="Ala_racemase"/>
    <property type="match status" value="1"/>
</dbReference>
<dbReference type="InterPro" id="IPR000821">
    <property type="entry name" value="Ala_racemase"/>
</dbReference>
<dbReference type="InterPro" id="IPR009006">
    <property type="entry name" value="Ala_racemase/Decarboxylase_C"/>
</dbReference>
<dbReference type="InterPro" id="IPR011079">
    <property type="entry name" value="Ala_racemase_C"/>
</dbReference>
<dbReference type="InterPro" id="IPR001608">
    <property type="entry name" value="Ala_racemase_N"/>
</dbReference>
<dbReference type="InterPro" id="IPR020622">
    <property type="entry name" value="Ala_racemase_pyridoxalP-BS"/>
</dbReference>
<dbReference type="InterPro" id="IPR029066">
    <property type="entry name" value="PLP-binding_barrel"/>
</dbReference>
<dbReference type="NCBIfam" id="TIGR00492">
    <property type="entry name" value="alr"/>
    <property type="match status" value="1"/>
</dbReference>
<dbReference type="PANTHER" id="PTHR30511">
    <property type="entry name" value="ALANINE RACEMASE"/>
    <property type="match status" value="1"/>
</dbReference>
<dbReference type="PANTHER" id="PTHR30511:SF0">
    <property type="entry name" value="ALANINE RACEMASE, CATABOLIC-RELATED"/>
    <property type="match status" value="1"/>
</dbReference>
<dbReference type="Pfam" id="PF00842">
    <property type="entry name" value="Ala_racemase_C"/>
    <property type="match status" value="1"/>
</dbReference>
<dbReference type="Pfam" id="PF01168">
    <property type="entry name" value="Ala_racemase_N"/>
    <property type="match status" value="1"/>
</dbReference>
<dbReference type="PRINTS" id="PR00992">
    <property type="entry name" value="ALARACEMASE"/>
</dbReference>
<dbReference type="SMART" id="SM01005">
    <property type="entry name" value="Ala_racemase_C"/>
    <property type="match status" value="1"/>
</dbReference>
<dbReference type="SUPFAM" id="SSF50621">
    <property type="entry name" value="Alanine racemase C-terminal domain-like"/>
    <property type="match status" value="1"/>
</dbReference>
<dbReference type="SUPFAM" id="SSF51419">
    <property type="entry name" value="PLP-binding barrel"/>
    <property type="match status" value="1"/>
</dbReference>
<dbReference type="PROSITE" id="PS00395">
    <property type="entry name" value="ALANINE_RACEMASE"/>
    <property type="match status" value="1"/>
</dbReference>
<protein>
    <recommendedName>
        <fullName evidence="1">Alanine racemase</fullName>
        <ecNumber evidence="1">5.1.1.1</ecNumber>
    </recommendedName>
</protein>
<name>ALR_STAA3</name>
<sequence length="382" mass="42823">MSDKYYRSAYMNVDLNAVASNFKVFSTLHPNKTVMAVVKANAYGLGSVKVARHLMENGATFFAVATLDEAIELRMHGITAKILVLGVLPAKDIDKAIQHRVALTVPSKQWLKEAIKNISGEQEKKLWLHIKLDTGMGRLGIKDTKTYQEVIEIIQQYEQLVFEGVFTHFACADEPGDMTTEQYQRFKDMVNEAIKPEYIHCQNSAGSLLMDCQFCNAIRPGISLYGYYPSEYVQQKVKVHLKPSVQLIANVVQTKTLQAGESVSYGATYTATDPTTIALLPIGYADGYLRIMQGSFVNVNGHQCEVIGRVCMDQTIVKVPDQVKAGDSVILIDNHRESPQSVEVVAEKQHTINYEVLCNLSRRLPRIYHDGDQRFVTNELLK</sequence>
<organism>
    <name type="scientific">Staphylococcus aureus (strain USA300)</name>
    <dbReference type="NCBI Taxonomy" id="367830"/>
    <lineage>
        <taxon>Bacteria</taxon>
        <taxon>Bacillati</taxon>
        <taxon>Bacillota</taxon>
        <taxon>Bacilli</taxon>
        <taxon>Bacillales</taxon>
        <taxon>Staphylococcaceae</taxon>
        <taxon>Staphylococcus</taxon>
    </lineage>
</organism>
<reference key="1">
    <citation type="journal article" date="2006" name="Lancet">
        <title>Complete genome sequence of USA300, an epidemic clone of community-acquired meticillin-resistant Staphylococcus aureus.</title>
        <authorList>
            <person name="Diep B.A."/>
            <person name="Gill S.R."/>
            <person name="Chang R.F."/>
            <person name="Phan T.H."/>
            <person name="Chen J.H."/>
            <person name="Davidson M.G."/>
            <person name="Lin F."/>
            <person name="Lin J."/>
            <person name="Carleton H.A."/>
            <person name="Mongodin E.F."/>
            <person name="Sensabaugh G.F."/>
            <person name="Perdreau-Remington F."/>
        </authorList>
    </citation>
    <scope>NUCLEOTIDE SEQUENCE [LARGE SCALE GENOMIC DNA]</scope>
    <source>
        <strain>USA300</strain>
    </source>
</reference>
<gene>
    <name type="primary">alr</name>
    <name type="ordered locus">SAUSA300_2027</name>
</gene>
<accession>Q2FF55</accession>
<comment type="function">
    <text evidence="1">Catalyzes the interconversion of L-alanine and D-alanine. May also act on other amino acids.</text>
</comment>
<comment type="catalytic activity">
    <reaction evidence="1">
        <text>L-alanine = D-alanine</text>
        <dbReference type="Rhea" id="RHEA:20249"/>
        <dbReference type="ChEBI" id="CHEBI:57416"/>
        <dbReference type="ChEBI" id="CHEBI:57972"/>
        <dbReference type="EC" id="5.1.1.1"/>
    </reaction>
</comment>
<comment type="cofactor">
    <cofactor evidence="1">
        <name>pyridoxal 5'-phosphate</name>
        <dbReference type="ChEBI" id="CHEBI:597326"/>
    </cofactor>
</comment>
<comment type="pathway">
    <text evidence="1">Amino-acid biosynthesis; D-alanine biosynthesis; D-alanine from L-alanine: step 1/1.</text>
</comment>
<comment type="similarity">
    <text evidence="1">Belongs to the alanine racemase family.</text>
</comment>
<evidence type="ECO:0000255" key="1">
    <source>
        <dbReference type="HAMAP-Rule" id="MF_01201"/>
    </source>
</evidence>